<keyword id="KW-0924">Ammonia transport</keyword>
<keyword id="KW-1003">Cell membrane</keyword>
<keyword id="KW-0325">Glycoprotein</keyword>
<keyword id="KW-0472">Membrane</keyword>
<keyword id="KW-0812">Transmembrane</keyword>
<keyword id="KW-1133">Transmembrane helix</keyword>
<keyword id="KW-0813">Transport</keyword>
<protein>
    <recommendedName>
        <fullName>Ammonium transporter Rh type B</fullName>
    </recommendedName>
    <alternativeName>
        <fullName>Rhesus blood group family type B glycoprotein</fullName>
        <shortName>Rh family type B glycoprotein</shortName>
        <shortName>Rh type B glycoprotein</shortName>
    </alternativeName>
</protein>
<proteinExistence type="inferred from homology"/>
<organism>
    <name type="scientific">Papio hamadryas</name>
    <name type="common">Hamadryas baboon</name>
    <dbReference type="NCBI Taxonomy" id="9557"/>
    <lineage>
        <taxon>Eukaryota</taxon>
        <taxon>Metazoa</taxon>
        <taxon>Chordata</taxon>
        <taxon>Craniata</taxon>
        <taxon>Vertebrata</taxon>
        <taxon>Euteleostomi</taxon>
        <taxon>Mammalia</taxon>
        <taxon>Eutheria</taxon>
        <taxon>Euarchontoglires</taxon>
        <taxon>Primates</taxon>
        <taxon>Haplorrhini</taxon>
        <taxon>Catarrhini</taxon>
        <taxon>Cercopithecidae</taxon>
        <taxon>Cercopithecinae</taxon>
        <taxon>Papio</taxon>
    </lineage>
</organism>
<comment type="function">
    <text evidence="2">Ammonium transporter involved in the maintenance of acid-base homeostasis. Transports ammonium and its related derivative methylammonium across the basolateral plasma membrane of epithelial cells likely contributing to renal transepithelial ammonia transport and ammonia metabolism. May transport either NH4(+) or NH3 ammonia species predominantly mediating an electrogenic NH4(+) transport (By similarity). May act as a CO2 channel providing for renal acid secretion (By similarity).</text>
</comment>
<comment type="catalytic activity">
    <reaction evidence="2">
        <text>NH4(+)(in) = NH4(+)(out)</text>
        <dbReference type="Rhea" id="RHEA:28747"/>
        <dbReference type="ChEBI" id="CHEBI:28938"/>
    </reaction>
    <physiologicalReaction direction="left-to-right" evidence="2">
        <dbReference type="Rhea" id="RHEA:28748"/>
    </physiologicalReaction>
    <physiologicalReaction direction="right-to-left" evidence="2">
        <dbReference type="Rhea" id="RHEA:28749"/>
    </physiologicalReaction>
</comment>
<comment type="catalytic activity">
    <reaction evidence="2">
        <text>methylamine(out) = methylamine(in)</text>
        <dbReference type="Rhea" id="RHEA:74391"/>
        <dbReference type="ChEBI" id="CHEBI:59338"/>
    </reaction>
    <physiologicalReaction direction="left-to-right" evidence="2">
        <dbReference type="Rhea" id="RHEA:74392"/>
    </physiologicalReaction>
</comment>
<comment type="catalytic activity">
    <reaction evidence="2">
        <text>CO2(out) = CO2(in)</text>
        <dbReference type="Rhea" id="RHEA:74891"/>
        <dbReference type="ChEBI" id="CHEBI:16526"/>
    </reaction>
    <physiologicalReaction direction="left-to-right" evidence="2">
        <dbReference type="Rhea" id="RHEA:74892"/>
    </physiologicalReaction>
</comment>
<comment type="subunit">
    <text evidence="2">Interacts (via C-terminus) with ANK2 and ANK3; required for targeting to the basolateral membrane.</text>
</comment>
<comment type="subcellular location">
    <subcellularLocation>
        <location evidence="2">Cell membrane</location>
        <topology evidence="2">Multi-pass membrane protein</topology>
    </subcellularLocation>
    <subcellularLocation>
        <location evidence="2">Basolateral cell membrane</location>
        <topology evidence="3">Multi-pass membrane protein</topology>
    </subcellularLocation>
</comment>
<comment type="PTM">
    <text evidence="1">N-glycosylated.</text>
</comment>
<comment type="similarity">
    <text evidence="5">Belongs to the ammonium transporter (TC 2.A.49) family. Rh subfamily.</text>
</comment>
<evidence type="ECO:0000250" key="1"/>
<evidence type="ECO:0000250" key="2">
    <source>
        <dbReference type="UniProtKB" id="Q9H310"/>
    </source>
</evidence>
<evidence type="ECO:0000255" key="3"/>
<evidence type="ECO:0000256" key="4">
    <source>
        <dbReference type="SAM" id="MobiDB-lite"/>
    </source>
</evidence>
<evidence type="ECO:0000305" key="5"/>
<name>RHBG_PAPHA</name>
<gene>
    <name type="primary">RHBG</name>
</gene>
<accession>Q8WNQ5</accession>
<feature type="chain" id="PRO_0000283601" description="Ammonium transporter Rh type B">
    <location>
        <begin position="1"/>
        <end position="458"/>
    </location>
</feature>
<feature type="topological domain" description="Cytoplasmic" evidence="3">
    <location>
        <begin position="1"/>
        <end position="13"/>
    </location>
</feature>
<feature type="transmembrane region" description="Helical" evidence="3">
    <location>
        <begin position="14"/>
        <end position="34"/>
    </location>
</feature>
<feature type="topological domain" description="Extracellular" evidence="3">
    <location>
        <begin position="35"/>
        <end position="61"/>
    </location>
</feature>
<feature type="transmembrane region" description="Helical" evidence="3">
    <location>
        <begin position="62"/>
        <end position="82"/>
    </location>
</feature>
<feature type="topological domain" description="Cytoplasmic" evidence="3">
    <location>
        <begin position="83"/>
        <end position="86"/>
    </location>
</feature>
<feature type="transmembrane region" description="Helical" evidence="3">
    <location>
        <begin position="87"/>
        <end position="107"/>
    </location>
</feature>
<feature type="topological domain" description="Extracellular" evidence="3">
    <location>
        <begin position="108"/>
        <end position="124"/>
    </location>
</feature>
<feature type="transmembrane region" description="Helical" evidence="3">
    <location>
        <begin position="125"/>
        <end position="145"/>
    </location>
</feature>
<feature type="topological domain" description="Cytoplasmic" evidence="3">
    <location>
        <begin position="146"/>
        <end position="149"/>
    </location>
</feature>
<feature type="transmembrane region" description="Helical" evidence="3">
    <location>
        <begin position="150"/>
        <end position="170"/>
    </location>
</feature>
<feature type="topological domain" description="Extracellular" evidence="3">
    <location>
        <begin position="171"/>
        <end position="178"/>
    </location>
</feature>
<feature type="transmembrane region" description="Helical" evidence="3">
    <location>
        <begin position="179"/>
        <end position="201"/>
    </location>
</feature>
<feature type="topological domain" description="Cytoplasmic" evidence="3">
    <location>
        <begin position="202"/>
        <end position="219"/>
    </location>
</feature>
<feature type="transmembrane region" description="Helical" evidence="3">
    <location>
        <begin position="220"/>
        <end position="240"/>
    </location>
</feature>
<feature type="topological domain" description="Extracellular" evidence="3">
    <location>
        <begin position="241"/>
        <end position="251"/>
    </location>
</feature>
<feature type="transmembrane region" description="Helical" evidence="3">
    <location>
        <begin position="252"/>
        <end position="272"/>
    </location>
</feature>
<feature type="topological domain" description="Cytoplasmic" evidence="3">
    <location>
        <begin position="273"/>
        <end position="282"/>
    </location>
</feature>
<feature type="transmembrane region" description="Helical" evidence="3">
    <location>
        <begin position="283"/>
        <end position="303"/>
    </location>
</feature>
<feature type="topological domain" description="Extracellular" evidence="3">
    <location>
        <position position="304"/>
    </location>
</feature>
<feature type="transmembrane region" description="Helical" evidence="3">
    <location>
        <begin position="305"/>
        <end position="325"/>
    </location>
</feature>
<feature type="topological domain" description="Cytoplasmic" evidence="3">
    <location>
        <begin position="326"/>
        <end position="346"/>
    </location>
</feature>
<feature type="transmembrane region" description="Helical" evidence="3">
    <location>
        <begin position="347"/>
        <end position="367"/>
    </location>
</feature>
<feature type="topological domain" description="Extracellular" evidence="3">
    <location>
        <begin position="368"/>
        <end position="393"/>
    </location>
</feature>
<feature type="transmembrane region" description="Helical" evidence="3">
    <location>
        <begin position="394"/>
        <end position="414"/>
    </location>
</feature>
<feature type="topological domain" description="Cytoplasmic" evidence="3">
    <location>
        <begin position="415"/>
        <end position="458"/>
    </location>
</feature>
<feature type="region of interest" description="Interaction with ANK3" evidence="1">
    <location>
        <begin position="416"/>
        <end position="424"/>
    </location>
</feature>
<feature type="region of interest" description="Disordered" evidence="4">
    <location>
        <begin position="439"/>
        <end position="458"/>
    </location>
</feature>
<feature type="short sequence motif" description="Basolateral sorting signal" evidence="1">
    <location>
        <begin position="429"/>
        <end position="432"/>
    </location>
</feature>
<feature type="compositionally biased region" description="Basic and acidic residues" evidence="4">
    <location>
        <begin position="444"/>
        <end position="458"/>
    </location>
</feature>
<feature type="glycosylation site" description="N-linked (GlcNAc...) asparagine" evidence="3">
    <location>
        <position position="49"/>
    </location>
</feature>
<reference key="1">
    <citation type="journal article" date="2005" name="Proc. Natl. Acad. Sci. U.S.A.">
        <title>Evolutionary conservation and diversification of Rh family genes and proteins.</title>
        <authorList>
            <person name="Huang C.-H."/>
            <person name="Peng J."/>
        </authorList>
    </citation>
    <scope>NUCLEOTIDE SEQUENCE [GENOMIC DNA]</scope>
</reference>
<sequence length="458" mass="49436">MAGSPSRAAGRRLQLPLLCLFLQGATAVLFAVFVRYNHKTDAALWHRGNYSNADNEFYFRYPSFQDVHAMVFVGFGFLMVFLQRYGFSSVGFTFLLAAFALQWSTLVQGFLHSFHSGHIHVGVESMINADFCAGAVLISFGAVLGKTGPAQLLLMALLEVVLFGINEFVLLHLLGVRDAGGSMTIHTFGAYFGLVLSRVLYRPQLEKSKHRQGSVYHSDLFAMIGTIFLWIFWPSFNSALTALGAGQHRTALNTYYSLAASTLGTFALSALVGEDGRLDMVHIQNAALAGGVVVGTSSEMMLTPFGALAAGFLAGTVSTLGYKFFTPILESKFKVQDTCGVHNLHGMPGVLGALLGVLVAGLATHEAYGDGLESVFPLIAEGQRSATSQAMLQLFGLFVTLMFASVGGGLGGLLLKLPFLDSPPDSQCYEDQVHWQVPGEHEDEAQRPLRVEEADTQA</sequence>
<dbReference type="EMBL" id="AF327275">
    <property type="protein sequence ID" value="AAL56018.1"/>
    <property type="molecule type" value="Genomic_DNA"/>
</dbReference>
<dbReference type="EMBL" id="AF327271">
    <property type="protein sequence ID" value="AAL56018.1"/>
    <property type="status" value="JOINED"/>
    <property type="molecule type" value="Genomic_DNA"/>
</dbReference>
<dbReference type="EMBL" id="AF327272">
    <property type="protein sequence ID" value="AAL56018.1"/>
    <property type="status" value="JOINED"/>
    <property type="molecule type" value="Genomic_DNA"/>
</dbReference>
<dbReference type="EMBL" id="AF327273">
    <property type="protein sequence ID" value="AAL56018.1"/>
    <property type="status" value="JOINED"/>
    <property type="molecule type" value="Genomic_DNA"/>
</dbReference>
<dbReference type="EMBL" id="AF327274">
    <property type="protein sequence ID" value="AAL56018.1"/>
    <property type="status" value="JOINED"/>
    <property type="molecule type" value="Genomic_DNA"/>
</dbReference>
<dbReference type="SMR" id="Q8WNQ5"/>
<dbReference type="GlyCosmos" id="Q8WNQ5">
    <property type="glycosylation" value="1 site, No reported glycans"/>
</dbReference>
<dbReference type="GO" id="GO:0016323">
    <property type="term" value="C:basolateral plasma membrane"/>
    <property type="evidence" value="ECO:0000250"/>
    <property type="project" value="UniProtKB"/>
</dbReference>
<dbReference type="GO" id="GO:0014731">
    <property type="term" value="C:spectrin-associated cytoskeleton"/>
    <property type="evidence" value="ECO:0000250"/>
    <property type="project" value="UniProtKB"/>
</dbReference>
<dbReference type="GO" id="GO:0008519">
    <property type="term" value="F:ammonium channel activity"/>
    <property type="evidence" value="ECO:0000250"/>
    <property type="project" value="UniProtKB"/>
</dbReference>
<dbReference type="GO" id="GO:0035379">
    <property type="term" value="F:carbon dioxide transmembrane transporter activity"/>
    <property type="evidence" value="ECO:0000250"/>
    <property type="project" value="UniProtKB"/>
</dbReference>
<dbReference type="GO" id="GO:0097272">
    <property type="term" value="P:ammonium homeostasis"/>
    <property type="evidence" value="ECO:0007669"/>
    <property type="project" value="TreeGrafter"/>
</dbReference>
<dbReference type="GO" id="GO:0072488">
    <property type="term" value="P:ammonium transmembrane transport"/>
    <property type="evidence" value="ECO:0000250"/>
    <property type="project" value="UniProtKB"/>
</dbReference>
<dbReference type="FunFam" id="1.10.3430.10:FF:000001">
    <property type="entry name" value="Ammonium transporter Rh type C"/>
    <property type="match status" value="1"/>
</dbReference>
<dbReference type="Gene3D" id="1.10.3430.10">
    <property type="entry name" value="Ammonium transporter AmtB like domains"/>
    <property type="match status" value="1"/>
</dbReference>
<dbReference type="InterPro" id="IPR029020">
    <property type="entry name" value="Ammonium/urea_transptr"/>
</dbReference>
<dbReference type="InterPro" id="IPR024041">
    <property type="entry name" value="NH4_transpt_AmtB-like_dom"/>
</dbReference>
<dbReference type="InterPro" id="IPR002229">
    <property type="entry name" value="RhesusRHD"/>
</dbReference>
<dbReference type="PANTHER" id="PTHR11730">
    <property type="entry name" value="AMMONIUM TRANSPORTER"/>
    <property type="match status" value="1"/>
</dbReference>
<dbReference type="PANTHER" id="PTHR11730:SF42">
    <property type="entry name" value="AMMONIUM TRANSPORTER RH TYPE B"/>
    <property type="match status" value="1"/>
</dbReference>
<dbReference type="Pfam" id="PF00909">
    <property type="entry name" value="Ammonium_transp"/>
    <property type="match status" value="1"/>
</dbReference>
<dbReference type="PRINTS" id="PR00342">
    <property type="entry name" value="RHESUSRHD"/>
</dbReference>
<dbReference type="SUPFAM" id="SSF111352">
    <property type="entry name" value="Ammonium transporter"/>
    <property type="match status" value="1"/>
</dbReference>